<sequence>MAAKFKLLVINGPNLNMLGKREPDKYGSRTLSEIMSELTCAADSLNVELTHFQSNSEQALIERIHDTWQAIDYIIINPAAFTHTSVALRDALLSVDIPFFEVHLSNVHAREAFRHHSYFSDVAQGVICGLGAMGYHAALEAAVNQLQNSN</sequence>
<evidence type="ECO:0000255" key="1">
    <source>
        <dbReference type="HAMAP-Rule" id="MF_00169"/>
    </source>
</evidence>
<comment type="function">
    <text evidence="1">Catalyzes a trans-dehydration via an enolate intermediate.</text>
</comment>
<comment type="catalytic activity">
    <reaction evidence="1">
        <text>3-dehydroquinate = 3-dehydroshikimate + H2O</text>
        <dbReference type="Rhea" id="RHEA:21096"/>
        <dbReference type="ChEBI" id="CHEBI:15377"/>
        <dbReference type="ChEBI" id="CHEBI:16630"/>
        <dbReference type="ChEBI" id="CHEBI:32364"/>
        <dbReference type="EC" id="4.2.1.10"/>
    </reaction>
</comment>
<comment type="pathway">
    <text evidence="1">Metabolic intermediate biosynthesis; chorismate biosynthesis; chorismate from D-erythrose 4-phosphate and phosphoenolpyruvate: step 3/7.</text>
</comment>
<comment type="subunit">
    <text evidence="1">Homododecamer.</text>
</comment>
<comment type="similarity">
    <text evidence="1">Belongs to the type-II 3-dehydroquinase family.</text>
</comment>
<feature type="chain" id="PRO_1000023497" description="3-dehydroquinate dehydratase">
    <location>
        <begin position="1"/>
        <end position="150"/>
    </location>
</feature>
<feature type="active site" description="Proton acceptor" evidence="1">
    <location>
        <position position="26"/>
    </location>
</feature>
<feature type="active site" description="Proton donor" evidence="1">
    <location>
        <position position="103"/>
    </location>
</feature>
<feature type="binding site" evidence="1">
    <location>
        <position position="77"/>
    </location>
    <ligand>
        <name>substrate</name>
    </ligand>
</feature>
<feature type="binding site" evidence="1">
    <location>
        <position position="83"/>
    </location>
    <ligand>
        <name>substrate</name>
    </ligand>
</feature>
<feature type="binding site" evidence="1">
    <location>
        <position position="90"/>
    </location>
    <ligand>
        <name>substrate</name>
    </ligand>
</feature>
<feature type="binding site" evidence="1">
    <location>
        <begin position="104"/>
        <end position="105"/>
    </location>
    <ligand>
        <name>substrate</name>
    </ligand>
</feature>
<feature type="binding site" evidence="1">
    <location>
        <position position="114"/>
    </location>
    <ligand>
        <name>substrate</name>
    </ligand>
</feature>
<feature type="site" description="Transition state stabilizer" evidence="1">
    <location>
        <position position="21"/>
    </location>
</feature>
<reference key="1">
    <citation type="journal article" date="2005" name="Genome Res.">
        <title>Coping with cold: the genome of the versatile marine Antarctica bacterium Pseudoalteromonas haloplanktis TAC125.</title>
        <authorList>
            <person name="Medigue C."/>
            <person name="Krin E."/>
            <person name="Pascal G."/>
            <person name="Barbe V."/>
            <person name="Bernsel A."/>
            <person name="Bertin P.N."/>
            <person name="Cheung F."/>
            <person name="Cruveiller S."/>
            <person name="D'Amico S."/>
            <person name="Duilio A."/>
            <person name="Fang G."/>
            <person name="Feller G."/>
            <person name="Ho C."/>
            <person name="Mangenot S."/>
            <person name="Marino G."/>
            <person name="Nilsson J."/>
            <person name="Parrilli E."/>
            <person name="Rocha E.P.C."/>
            <person name="Rouy Z."/>
            <person name="Sekowska A."/>
            <person name="Tutino M.L."/>
            <person name="Vallenet D."/>
            <person name="von Heijne G."/>
            <person name="Danchin A."/>
        </authorList>
    </citation>
    <scope>NUCLEOTIDE SEQUENCE [LARGE SCALE GENOMIC DNA]</scope>
    <source>
        <strain>TAC 125</strain>
    </source>
</reference>
<gene>
    <name evidence="1" type="primary">aroQ</name>
    <name type="ordered locus">PSHAa0264</name>
</gene>
<organism>
    <name type="scientific">Pseudoalteromonas translucida (strain TAC 125)</name>
    <dbReference type="NCBI Taxonomy" id="326442"/>
    <lineage>
        <taxon>Bacteria</taxon>
        <taxon>Pseudomonadati</taxon>
        <taxon>Pseudomonadota</taxon>
        <taxon>Gammaproteobacteria</taxon>
        <taxon>Alteromonadales</taxon>
        <taxon>Pseudoalteromonadaceae</taxon>
        <taxon>Pseudoalteromonas</taxon>
    </lineage>
</organism>
<accession>Q3IDT2</accession>
<dbReference type="EC" id="4.2.1.10" evidence="1"/>
<dbReference type="EMBL" id="CR954246">
    <property type="protein sequence ID" value="CAI85363.1"/>
    <property type="molecule type" value="Genomic_DNA"/>
</dbReference>
<dbReference type="SMR" id="Q3IDT2"/>
<dbReference type="STRING" id="326442.PSHAa0264"/>
<dbReference type="KEGG" id="pha:PSHAa0264"/>
<dbReference type="eggNOG" id="COG0757">
    <property type="taxonomic scope" value="Bacteria"/>
</dbReference>
<dbReference type="HOGENOM" id="CLU_090968_1_0_6"/>
<dbReference type="BioCyc" id="PHAL326442:PSHA_RS01310-MONOMER"/>
<dbReference type="UniPathway" id="UPA00053">
    <property type="reaction ID" value="UER00086"/>
</dbReference>
<dbReference type="Proteomes" id="UP000006843">
    <property type="component" value="Chromosome I"/>
</dbReference>
<dbReference type="GO" id="GO:0003855">
    <property type="term" value="F:3-dehydroquinate dehydratase activity"/>
    <property type="evidence" value="ECO:0007669"/>
    <property type="project" value="UniProtKB-UniRule"/>
</dbReference>
<dbReference type="GO" id="GO:0008652">
    <property type="term" value="P:amino acid biosynthetic process"/>
    <property type="evidence" value="ECO:0007669"/>
    <property type="project" value="UniProtKB-KW"/>
</dbReference>
<dbReference type="GO" id="GO:0009073">
    <property type="term" value="P:aromatic amino acid family biosynthetic process"/>
    <property type="evidence" value="ECO:0007669"/>
    <property type="project" value="UniProtKB-KW"/>
</dbReference>
<dbReference type="GO" id="GO:0009423">
    <property type="term" value="P:chorismate biosynthetic process"/>
    <property type="evidence" value="ECO:0007669"/>
    <property type="project" value="UniProtKB-UniRule"/>
</dbReference>
<dbReference type="GO" id="GO:0019631">
    <property type="term" value="P:quinate catabolic process"/>
    <property type="evidence" value="ECO:0007669"/>
    <property type="project" value="TreeGrafter"/>
</dbReference>
<dbReference type="CDD" id="cd00466">
    <property type="entry name" value="DHQase_II"/>
    <property type="match status" value="1"/>
</dbReference>
<dbReference type="Gene3D" id="3.40.50.9100">
    <property type="entry name" value="Dehydroquinase, class II"/>
    <property type="match status" value="1"/>
</dbReference>
<dbReference type="HAMAP" id="MF_00169">
    <property type="entry name" value="AroQ"/>
    <property type="match status" value="1"/>
</dbReference>
<dbReference type="InterPro" id="IPR001874">
    <property type="entry name" value="DHquinase_II"/>
</dbReference>
<dbReference type="InterPro" id="IPR018509">
    <property type="entry name" value="DHquinase_II_CS"/>
</dbReference>
<dbReference type="InterPro" id="IPR036441">
    <property type="entry name" value="DHquinase_II_sf"/>
</dbReference>
<dbReference type="NCBIfam" id="TIGR01088">
    <property type="entry name" value="aroQ"/>
    <property type="match status" value="1"/>
</dbReference>
<dbReference type="NCBIfam" id="NF003804">
    <property type="entry name" value="PRK05395.1-1"/>
    <property type="match status" value="1"/>
</dbReference>
<dbReference type="NCBIfam" id="NF003805">
    <property type="entry name" value="PRK05395.1-2"/>
    <property type="match status" value="1"/>
</dbReference>
<dbReference type="NCBIfam" id="NF003806">
    <property type="entry name" value="PRK05395.1-3"/>
    <property type="match status" value="1"/>
</dbReference>
<dbReference type="NCBIfam" id="NF003807">
    <property type="entry name" value="PRK05395.1-4"/>
    <property type="match status" value="1"/>
</dbReference>
<dbReference type="PANTHER" id="PTHR21272">
    <property type="entry name" value="CATABOLIC 3-DEHYDROQUINASE"/>
    <property type="match status" value="1"/>
</dbReference>
<dbReference type="PANTHER" id="PTHR21272:SF3">
    <property type="entry name" value="CATABOLIC 3-DEHYDROQUINASE"/>
    <property type="match status" value="1"/>
</dbReference>
<dbReference type="Pfam" id="PF01220">
    <property type="entry name" value="DHquinase_II"/>
    <property type="match status" value="1"/>
</dbReference>
<dbReference type="PIRSF" id="PIRSF001399">
    <property type="entry name" value="DHquinase_II"/>
    <property type="match status" value="1"/>
</dbReference>
<dbReference type="SUPFAM" id="SSF52304">
    <property type="entry name" value="Type II 3-dehydroquinate dehydratase"/>
    <property type="match status" value="1"/>
</dbReference>
<dbReference type="PROSITE" id="PS01029">
    <property type="entry name" value="DEHYDROQUINASE_II"/>
    <property type="match status" value="1"/>
</dbReference>
<keyword id="KW-0028">Amino-acid biosynthesis</keyword>
<keyword id="KW-0057">Aromatic amino acid biosynthesis</keyword>
<keyword id="KW-0456">Lyase</keyword>
<keyword id="KW-1185">Reference proteome</keyword>
<proteinExistence type="inferred from homology"/>
<protein>
    <recommendedName>
        <fullName evidence="1">3-dehydroquinate dehydratase</fullName>
        <shortName evidence="1">3-dehydroquinase</shortName>
        <ecNumber evidence="1">4.2.1.10</ecNumber>
    </recommendedName>
    <alternativeName>
        <fullName evidence="1">Type II DHQase</fullName>
    </alternativeName>
</protein>
<name>AROQ_PSET1</name>